<protein>
    <recommendedName>
        <fullName evidence="1">Lipid-A-disaccharide synthase</fullName>
        <ecNumber evidence="1">2.4.1.182</ecNumber>
    </recommendedName>
</protein>
<accession>A9NCA7</accession>
<evidence type="ECO:0000255" key="1">
    <source>
        <dbReference type="HAMAP-Rule" id="MF_00392"/>
    </source>
</evidence>
<sequence length="376" mass="41955">MSNKSVLLIAGEPSGDLLGAHLAQSLKSLEPNLKLAGMGGKRMREAGVEVFINADKLAVVGLLEILRQFRDIRHAMQTLKRYFKKTPPDLVVFIDYPGFNLHMAKQAKKAGIKVLYYVSPQIWAWRYGRIKKIKKYVDHMAVLFDFEEKLYQKENVPVSFVGHPLANAPTPSLSRNEICKQFNLDPDKPIVALFPGSREQEINKLLPMMVQAGKLIQTQIPTVQFILPLALNLALDKIRPFLSPEIKVIQNDISYVLAIAHAAVAASGTVTLEIALQQVPLVIIYKVAPLTFWLGKKLIRLSFIGLCNLVSPEPVAVELLQQDATPQAIADEVFQLLNNHNYRQSIIGKLGHLRPQLDRGNAAQNVAKVVHNLIFS</sequence>
<name>LPXB_COXBR</name>
<reference key="1">
    <citation type="submission" date="2007-11" db="EMBL/GenBank/DDBJ databases">
        <title>Genome sequencing of phylogenetically and phenotypically diverse Coxiella burnetii isolates.</title>
        <authorList>
            <person name="Seshadri R."/>
            <person name="Samuel J.E."/>
        </authorList>
    </citation>
    <scope>NUCLEOTIDE SEQUENCE [LARGE SCALE GENOMIC DNA]</scope>
    <source>
        <strain>RSA 331 / Henzerling II</strain>
    </source>
</reference>
<dbReference type="EC" id="2.4.1.182" evidence="1"/>
<dbReference type="EMBL" id="CP000890">
    <property type="protein sequence ID" value="ABX78484.1"/>
    <property type="molecule type" value="Genomic_DNA"/>
</dbReference>
<dbReference type="RefSeq" id="WP_010957694.1">
    <property type="nucleotide sequence ID" value="NC_010117.1"/>
</dbReference>
<dbReference type="SMR" id="A9NCA7"/>
<dbReference type="CAZy" id="GT19">
    <property type="family name" value="Glycosyltransferase Family 19"/>
</dbReference>
<dbReference type="KEGG" id="cbs:COXBURSA331_A0735"/>
<dbReference type="HOGENOM" id="CLU_036577_3_1_6"/>
<dbReference type="UniPathway" id="UPA00973"/>
<dbReference type="GO" id="GO:0016020">
    <property type="term" value="C:membrane"/>
    <property type="evidence" value="ECO:0007669"/>
    <property type="project" value="GOC"/>
</dbReference>
<dbReference type="GO" id="GO:0008915">
    <property type="term" value="F:lipid-A-disaccharide synthase activity"/>
    <property type="evidence" value="ECO:0007669"/>
    <property type="project" value="UniProtKB-UniRule"/>
</dbReference>
<dbReference type="GO" id="GO:0005543">
    <property type="term" value="F:phospholipid binding"/>
    <property type="evidence" value="ECO:0007669"/>
    <property type="project" value="TreeGrafter"/>
</dbReference>
<dbReference type="GO" id="GO:0009245">
    <property type="term" value="P:lipid A biosynthetic process"/>
    <property type="evidence" value="ECO:0007669"/>
    <property type="project" value="UniProtKB-UniRule"/>
</dbReference>
<dbReference type="HAMAP" id="MF_00392">
    <property type="entry name" value="LpxB"/>
    <property type="match status" value="1"/>
</dbReference>
<dbReference type="InterPro" id="IPR003835">
    <property type="entry name" value="Glyco_trans_19"/>
</dbReference>
<dbReference type="NCBIfam" id="TIGR00215">
    <property type="entry name" value="lpxB"/>
    <property type="match status" value="1"/>
</dbReference>
<dbReference type="PANTHER" id="PTHR30372">
    <property type="entry name" value="LIPID-A-DISACCHARIDE SYNTHASE"/>
    <property type="match status" value="1"/>
</dbReference>
<dbReference type="PANTHER" id="PTHR30372:SF4">
    <property type="entry name" value="LIPID-A-DISACCHARIDE SYNTHASE, MITOCHONDRIAL-RELATED"/>
    <property type="match status" value="1"/>
</dbReference>
<dbReference type="Pfam" id="PF02684">
    <property type="entry name" value="LpxB"/>
    <property type="match status" value="1"/>
</dbReference>
<dbReference type="SUPFAM" id="SSF53756">
    <property type="entry name" value="UDP-Glycosyltransferase/glycogen phosphorylase"/>
    <property type="match status" value="1"/>
</dbReference>
<proteinExistence type="inferred from homology"/>
<feature type="chain" id="PRO_1000080277" description="Lipid-A-disaccharide synthase">
    <location>
        <begin position="1"/>
        <end position="376"/>
    </location>
</feature>
<organism>
    <name type="scientific">Coxiella burnetii (strain RSA 331 / Henzerling II)</name>
    <dbReference type="NCBI Taxonomy" id="360115"/>
    <lineage>
        <taxon>Bacteria</taxon>
        <taxon>Pseudomonadati</taxon>
        <taxon>Pseudomonadota</taxon>
        <taxon>Gammaproteobacteria</taxon>
        <taxon>Legionellales</taxon>
        <taxon>Coxiellaceae</taxon>
        <taxon>Coxiella</taxon>
    </lineage>
</organism>
<comment type="function">
    <text evidence="1">Condensation of UDP-2,3-diacylglucosamine and 2,3-diacylglucosamine-1-phosphate to form lipid A disaccharide, a precursor of lipid A, a phosphorylated glycolipid that anchors the lipopolysaccharide to the outer membrane of the cell.</text>
</comment>
<comment type="catalytic activity">
    <reaction evidence="1">
        <text>a lipid X + a UDP-2-N,3-O-bis[(3R)-3-hydroxyacyl]-alpha-D-glucosamine = a lipid A disaccharide + UDP + H(+)</text>
        <dbReference type="Rhea" id="RHEA:67828"/>
        <dbReference type="ChEBI" id="CHEBI:15378"/>
        <dbReference type="ChEBI" id="CHEBI:58223"/>
        <dbReference type="ChEBI" id="CHEBI:137748"/>
        <dbReference type="ChEBI" id="CHEBI:176338"/>
        <dbReference type="ChEBI" id="CHEBI:176343"/>
        <dbReference type="EC" id="2.4.1.182"/>
    </reaction>
</comment>
<comment type="pathway">
    <text evidence="1">Bacterial outer membrane biogenesis; LPS lipid A biosynthesis.</text>
</comment>
<comment type="similarity">
    <text evidence="1">Belongs to the LpxB family.</text>
</comment>
<gene>
    <name evidence="1" type="primary">lpxB</name>
    <name type="ordered locus">COXBURSA331_A0735</name>
</gene>
<keyword id="KW-0328">Glycosyltransferase</keyword>
<keyword id="KW-0441">Lipid A biosynthesis</keyword>
<keyword id="KW-0444">Lipid biosynthesis</keyword>
<keyword id="KW-0443">Lipid metabolism</keyword>
<keyword id="KW-0808">Transferase</keyword>